<evidence type="ECO:0000250" key="1">
    <source>
        <dbReference type="UniProtKB" id="A6ZQI5"/>
    </source>
</evidence>
<evidence type="ECO:0000250" key="2">
    <source>
        <dbReference type="UniProtKB" id="P47008"/>
    </source>
</evidence>
<evidence type="ECO:0000255" key="3">
    <source>
        <dbReference type="PROSITE-ProRule" id="PRU00056"/>
    </source>
</evidence>
<evidence type="ECO:0000256" key="4">
    <source>
        <dbReference type="SAM" id="MobiDB-lite"/>
    </source>
</evidence>
<evidence type="ECO:0000305" key="5"/>
<comment type="function">
    <text evidence="2">Non-classical phosphatidylinositol (PtdIns) transfer protein (PITP), which exhibits PtdIns-binding/transfer activity in the absence of detectable PtdCho-binding/transfer activity. Regulates PtdIns(4,5)P2 homeostasis at the plasma membrane. Heme-binding protein that may play a role in organic oxidant-induced stress responses.</text>
</comment>
<comment type="catalytic activity">
    <reaction evidence="2">
        <text>a 1,2-diacyl-sn-glycero-3-phospho-(1D-myo-inositol)(in) = a 1,2-diacyl-sn-glycero-3-phospho-(1D-myo-inositol)(out)</text>
        <dbReference type="Rhea" id="RHEA:38691"/>
        <dbReference type="ChEBI" id="CHEBI:57880"/>
    </reaction>
    <physiologicalReaction direction="left-to-right" evidence="2">
        <dbReference type="Rhea" id="RHEA:38692"/>
    </physiologicalReaction>
</comment>
<comment type="cofactor">
    <cofactor evidence="1">
        <name>heme b</name>
        <dbReference type="ChEBI" id="CHEBI:60344"/>
    </cofactor>
</comment>
<comment type="subcellular location">
    <subcellularLocation>
        <location evidence="2">Cytoplasm</location>
    </subcellularLocation>
    <subcellularLocation>
        <location evidence="2">Endoplasmic reticulum membrane</location>
        <topology evidence="2">Peripheral membrane protein</topology>
    </subcellularLocation>
    <subcellularLocation>
        <location evidence="2">Microsome membrane</location>
        <topology evidence="2">Peripheral membrane protein</topology>
    </subcellularLocation>
</comment>
<comment type="similarity">
    <text evidence="5">Belongs to the SFH5 family.</text>
</comment>
<reference key="1">
    <citation type="journal article" date="2005" name="Nature">
        <title>Sequencing of Aspergillus nidulans and comparative analysis with A. fumigatus and A. oryzae.</title>
        <authorList>
            <person name="Galagan J.E."/>
            <person name="Calvo S.E."/>
            <person name="Cuomo C."/>
            <person name="Ma L.-J."/>
            <person name="Wortman J.R."/>
            <person name="Batzoglou S."/>
            <person name="Lee S.-I."/>
            <person name="Bastuerkmen M."/>
            <person name="Spevak C.C."/>
            <person name="Clutterbuck J."/>
            <person name="Kapitonov V."/>
            <person name="Jurka J."/>
            <person name="Scazzocchio C."/>
            <person name="Farman M.L."/>
            <person name="Butler J."/>
            <person name="Purcell S."/>
            <person name="Harris S."/>
            <person name="Braus G.H."/>
            <person name="Draht O."/>
            <person name="Busch S."/>
            <person name="D'Enfert C."/>
            <person name="Bouchier C."/>
            <person name="Goldman G.H."/>
            <person name="Bell-Pedersen D."/>
            <person name="Griffiths-Jones S."/>
            <person name="Doonan J.H."/>
            <person name="Yu J."/>
            <person name="Vienken K."/>
            <person name="Pain A."/>
            <person name="Freitag M."/>
            <person name="Selker E.U."/>
            <person name="Archer D.B."/>
            <person name="Penalva M.A."/>
            <person name="Oakley B.R."/>
            <person name="Momany M."/>
            <person name="Tanaka T."/>
            <person name="Kumagai T."/>
            <person name="Asai K."/>
            <person name="Machida M."/>
            <person name="Nierman W.C."/>
            <person name="Denning D.W."/>
            <person name="Caddick M.X."/>
            <person name="Hynes M."/>
            <person name="Paoletti M."/>
            <person name="Fischer R."/>
            <person name="Miller B.L."/>
            <person name="Dyer P.S."/>
            <person name="Sachs M.S."/>
            <person name="Osmani S.A."/>
            <person name="Birren B.W."/>
        </authorList>
    </citation>
    <scope>NUCLEOTIDE SEQUENCE [LARGE SCALE GENOMIC DNA]</scope>
    <source>
        <strain>FGSC A4 / ATCC 38163 / CBS 112.46 / NRRL 194 / M139</strain>
    </source>
</reference>
<reference key="2">
    <citation type="journal article" date="2009" name="Fungal Genet. Biol.">
        <title>The 2008 update of the Aspergillus nidulans genome annotation: a community effort.</title>
        <authorList>
            <person name="Wortman J.R."/>
            <person name="Gilsenan J.M."/>
            <person name="Joardar V."/>
            <person name="Deegan J."/>
            <person name="Clutterbuck J."/>
            <person name="Andersen M.R."/>
            <person name="Archer D."/>
            <person name="Bencina M."/>
            <person name="Braus G."/>
            <person name="Coutinho P."/>
            <person name="von Dohren H."/>
            <person name="Doonan J."/>
            <person name="Driessen A.J."/>
            <person name="Durek P."/>
            <person name="Espeso E."/>
            <person name="Fekete E."/>
            <person name="Flipphi M."/>
            <person name="Estrada C.G."/>
            <person name="Geysens S."/>
            <person name="Goldman G."/>
            <person name="de Groot P.W."/>
            <person name="Hansen K."/>
            <person name="Harris S.D."/>
            <person name="Heinekamp T."/>
            <person name="Helmstaedt K."/>
            <person name="Henrissat B."/>
            <person name="Hofmann G."/>
            <person name="Homan T."/>
            <person name="Horio T."/>
            <person name="Horiuchi H."/>
            <person name="James S."/>
            <person name="Jones M."/>
            <person name="Karaffa L."/>
            <person name="Karanyi Z."/>
            <person name="Kato M."/>
            <person name="Keller N."/>
            <person name="Kelly D.E."/>
            <person name="Kiel J.A."/>
            <person name="Kim J.M."/>
            <person name="van der Klei I.J."/>
            <person name="Klis F.M."/>
            <person name="Kovalchuk A."/>
            <person name="Krasevec N."/>
            <person name="Kubicek C.P."/>
            <person name="Liu B."/>
            <person name="Maccabe A."/>
            <person name="Meyer V."/>
            <person name="Mirabito P."/>
            <person name="Miskei M."/>
            <person name="Mos M."/>
            <person name="Mullins J."/>
            <person name="Nelson D.R."/>
            <person name="Nielsen J."/>
            <person name="Oakley B.R."/>
            <person name="Osmani S.A."/>
            <person name="Pakula T."/>
            <person name="Paszewski A."/>
            <person name="Paulsen I."/>
            <person name="Pilsyk S."/>
            <person name="Pocsi I."/>
            <person name="Punt P.J."/>
            <person name="Ram A.F."/>
            <person name="Ren Q."/>
            <person name="Robellet X."/>
            <person name="Robson G."/>
            <person name="Seiboth B."/>
            <person name="van Solingen P."/>
            <person name="Specht T."/>
            <person name="Sun J."/>
            <person name="Taheri-Talesh N."/>
            <person name="Takeshita N."/>
            <person name="Ussery D."/>
            <person name="vanKuyk P.A."/>
            <person name="Visser H."/>
            <person name="van de Vondervoort P.J."/>
            <person name="de Vries R.P."/>
            <person name="Walton J."/>
            <person name="Xiang X."/>
            <person name="Xiong Y."/>
            <person name="Zeng A.P."/>
            <person name="Brandt B.W."/>
            <person name="Cornell M.J."/>
            <person name="van den Hondel C.A."/>
            <person name="Visser J."/>
            <person name="Oliver S.G."/>
            <person name="Turner G."/>
        </authorList>
    </citation>
    <scope>GENOME REANNOTATION</scope>
    <source>
        <strain>FGSC A4 / ATCC 38163 / CBS 112.46 / NRRL 194 / M139</strain>
    </source>
</reference>
<organism>
    <name type="scientific">Emericella nidulans (strain FGSC A4 / ATCC 38163 / CBS 112.46 / NRRL 194 / M139)</name>
    <name type="common">Aspergillus nidulans</name>
    <dbReference type="NCBI Taxonomy" id="227321"/>
    <lineage>
        <taxon>Eukaryota</taxon>
        <taxon>Fungi</taxon>
        <taxon>Dikarya</taxon>
        <taxon>Ascomycota</taxon>
        <taxon>Pezizomycotina</taxon>
        <taxon>Eurotiomycetes</taxon>
        <taxon>Eurotiomycetidae</taxon>
        <taxon>Eurotiales</taxon>
        <taxon>Aspergillaceae</taxon>
        <taxon>Aspergillus</taxon>
        <taxon>Aspergillus subgen. Nidulantes</taxon>
    </lineage>
</organism>
<protein>
    <recommendedName>
        <fullName>Phosphatidylinositol transfer protein sfh5</fullName>
        <shortName>PITP sfh5</shortName>
    </recommendedName>
</protein>
<keyword id="KW-0963">Cytoplasm</keyword>
<keyword id="KW-0256">Endoplasmic reticulum</keyword>
<keyword id="KW-0349">Heme</keyword>
<keyword id="KW-0408">Iron</keyword>
<keyword id="KW-0445">Lipid transport</keyword>
<keyword id="KW-0472">Membrane</keyword>
<keyword id="KW-0479">Metal-binding</keyword>
<keyword id="KW-0492">Microsome</keyword>
<keyword id="KW-1185">Reference proteome</keyword>
<keyword id="KW-0813">Transport</keyword>
<proteinExistence type="inferred from homology"/>
<name>SFH5_EMENI</name>
<feature type="chain" id="PRO_0000324979" description="Phosphatidylinositol transfer protein sfh5">
    <location>
        <begin position="1"/>
        <end position="409"/>
    </location>
</feature>
<feature type="domain" description="CRAL-TRIO" evidence="3">
    <location>
        <begin position="199"/>
        <end position="375"/>
    </location>
</feature>
<feature type="region of interest" description="Disordered" evidence="4">
    <location>
        <begin position="1"/>
        <end position="107"/>
    </location>
</feature>
<feature type="region of interest" description="Disordered" evidence="4">
    <location>
        <begin position="366"/>
        <end position="409"/>
    </location>
</feature>
<feature type="compositionally biased region" description="Low complexity" evidence="4">
    <location>
        <begin position="29"/>
        <end position="54"/>
    </location>
</feature>
<feature type="compositionally biased region" description="Low complexity" evidence="4">
    <location>
        <begin position="62"/>
        <end position="80"/>
    </location>
</feature>
<feature type="compositionally biased region" description="Basic and acidic residues" evidence="4">
    <location>
        <begin position="98"/>
        <end position="107"/>
    </location>
</feature>
<feature type="compositionally biased region" description="Basic and acidic residues" evidence="4">
    <location>
        <begin position="382"/>
        <end position="409"/>
    </location>
</feature>
<feature type="binding site" evidence="1">
    <location>
        <position position="224"/>
    </location>
    <ligand>
        <name>heme</name>
        <dbReference type="ChEBI" id="CHEBI:30413"/>
    </ligand>
</feature>
<feature type="binding site" evidence="1">
    <location>
        <position position="244"/>
    </location>
    <ligand>
        <name>heme</name>
        <dbReference type="ChEBI" id="CHEBI:30413"/>
    </ligand>
</feature>
<feature type="binding site" evidence="1">
    <location>
        <position position="278"/>
    </location>
    <ligand>
        <name>heme</name>
        <dbReference type="ChEBI" id="CHEBI:30413"/>
    </ligand>
</feature>
<feature type="binding site" description="proximal binding residue" evidence="1">
    <location>
        <position position="280"/>
    </location>
    <ligand>
        <name>heme</name>
        <dbReference type="ChEBI" id="CHEBI:30413"/>
    </ligand>
    <ligandPart>
        <name>Fe</name>
        <dbReference type="ChEBI" id="CHEBI:18248"/>
    </ligandPart>
</feature>
<feature type="binding site" evidence="1">
    <location>
        <position position="314"/>
    </location>
    <ligand>
        <name>heme</name>
        <dbReference type="ChEBI" id="CHEBI:30413"/>
    </ligand>
</feature>
<accession>Q5ATZ7</accession>
<accession>C8V7F5</accession>
<gene>
    <name type="primary">sfh5</name>
    <name type="ORF">AN8233</name>
</gene>
<sequence>MAEQAKLPDQAQPVPETQVPDNGKPEQQPTATESAPAPEPATTEPTTAATAPSAVDGTGETAPAAPEPAAAPVAAAAAAPAPEPTKSEPQPAVGEQSEPAKKDEPAKPEYFTKTPALEQFFDRLPTILSNTGHQEMWGVPLKHEVTDIPTINVLIKFLRANAGDLKAAEDQLSKALTWRKENDPIALADASKNSYDASKFKGLGYLTTYQREGKGDLVVTWNIYGAVKKFDETFGDITEFIKWRAALMELAVQELKLDQATSVIDYDGEDPYQMIQVHDYLNVSFLRMNPNVKAATKKTIDVFSTAYPELLREKFFVNVPAIMGWMFAVMKVFVNQNTARKFHPISNGANLAKEFPAGVAEKFPKAYGGSAPDLESSARTVALKEVKEEKKEEPKEGSKEEQKGEQKGE</sequence>
<dbReference type="EMBL" id="AACD01000144">
    <property type="protein sequence ID" value="EAA58889.1"/>
    <property type="molecule type" value="Genomic_DNA"/>
</dbReference>
<dbReference type="EMBL" id="BN001302">
    <property type="protein sequence ID" value="CBF74167.1"/>
    <property type="molecule type" value="Genomic_DNA"/>
</dbReference>
<dbReference type="RefSeq" id="XP_681502.1">
    <property type="nucleotide sequence ID" value="XM_676410.1"/>
</dbReference>
<dbReference type="SMR" id="Q5ATZ7"/>
<dbReference type="FunCoup" id="Q5ATZ7">
    <property type="interactions" value="51"/>
</dbReference>
<dbReference type="STRING" id="227321.Q5ATZ7"/>
<dbReference type="EnsemblFungi" id="CBF74167">
    <property type="protein sequence ID" value="CBF74167"/>
    <property type="gene ID" value="ANIA_08233"/>
</dbReference>
<dbReference type="KEGG" id="ani:ANIA_08233"/>
<dbReference type="VEuPathDB" id="FungiDB:AN8233"/>
<dbReference type="eggNOG" id="KOG1471">
    <property type="taxonomic scope" value="Eukaryota"/>
</dbReference>
<dbReference type="HOGENOM" id="CLU_045138_1_0_1"/>
<dbReference type="InParanoid" id="Q5ATZ7"/>
<dbReference type="OMA" id="MVQIHDY"/>
<dbReference type="OrthoDB" id="75724at2759"/>
<dbReference type="Proteomes" id="UP000000560">
    <property type="component" value="Chromosome II"/>
</dbReference>
<dbReference type="GO" id="GO:0032541">
    <property type="term" value="C:cortical endoplasmic reticulum"/>
    <property type="evidence" value="ECO:0000318"/>
    <property type="project" value="GO_Central"/>
</dbReference>
<dbReference type="GO" id="GO:0005829">
    <property type="term" value="C:cytosol"/>
    <property type="evidence" value="ECO:0000318"/>
    <property type="project" value="GO_Central"/>
</dbReference>
<dbReference type="GO" id="GO:0005789">
    <property type="term" value="C:endoplasmic reticulum membrane"/>
    <property type="evidence" value="ECO:0007669"/>
    <property type="project" value="UniProtKB-SubCell"/>
</dbReference>
<dbReference type="GO" id="GO:0005886">
    <property type="term" value="C:plasma membrane"/>
    <property type="evidence" value="ECO:0000318"/>
    <property type="project" value="GO_Central"/>
</dbReference>
<dbReference type="GO" id="GO:0046872">
    <property type="term" value="F:metal ion binding"/>
    <property type="evidence" value="ECO:0007669"/>
    <property type="project" value="UniProtKB-KW"/>
</dbReference>
<dbReference type="GO" id="GO:0008526">
    <property type="term" value="F:phosphatidylinositol transfer activity"/>
    <property type="evidence" value="ECO:0000318"/>
    <property type="project" value="GO_Central"/>
</dbReference>
<dbReference type="GO" id="GO:0043001">
    <property type="term" value="P:Golgi to plasma membrane protein transport"/>
    <property type="evidence" value="ECO:0000318"/>
    <property type="project" value="GO_Central"/>
</dbReference>
<dbReference type="GO" id="GO:0017157">
    <property type="term" value="P:regulation of exocytosis"/>
    <property type="evidence" value="ECO:0000318"/>
    <property type="project" value="GO_Central"/>
</dbReference>
<dbReference type="CDD" id="cd00170">
    <property type="entry name" value="SEC14"/>
    <property type="match status" value="1"/>
</dbReference>
<dbReference type="FunFam" id="3.40.525.10:FF:000017">
    <property type="entry name" value="Phosphatidylinositol transfer protein sfh5"/>
    <property type="match status" value="1"/>
</dbReference>
<dbReference type="Gene3D" id="3.40.525.10">
    <property type="entry name" value="CRAL-TRIO lipid binding domain"/>
    <property type="match status" value="1"/>
</dbReference>
<dbReference type="InterPro" id="IPR001251">
    <property type="entry name" value="CRAL-TRIO_dom"/>
</dbReference>
<dbReference type="InterPro" id="IPR036865">
    <property type="entry name" value="CRAL-TRIO_dom_sf"/>
</dbReference>
<dbReference type="InterPro" id="IPR011074">
    <property type="entry name" value="CRAL/TRIO_N_dom"/>
</dbReference>
<dbReference type="InterPro" id="IPR036273">
    <property type="entry name" value="CRAL/TRIO_N_dom_sf"/>
</dbReference>
<dbReference type="InterPro" id="IPR042938">
    <property type="entry name" value="Sfh5"/>
</dbReference>
<dbReference type="PANTHER" id="PTHR47669">
    <property type="entry name" value="PHOSPHATIDYLINOSITOL TRANSFER PROTEIN SFH5"/>
    <property type="match status" value="1"/>
</dbReference>
<dbReference type="PANTHER" id="PTHR47669:SF1">
    <property type="entry name" value="PHOSPHATIDYLINOSITOL TRANSFER PROTEIN SFH5"/>
    <property type="match status" value="1"/>
</dbReference>
<dbReference type="Pfam" id="PF00650">
    <property type="entry name" value="CRAL_TRIO"/>
    <property type="match status" value="1"/>
</dbReference>
<dbReference type="Pfam" id="PF03765">
    <property type="entry name" value="CRAL_TRIO_N"/>
    <property type="match status" value="1"/>
</dbReference>
<dbReference type="SMART" id="SM00516">
    <property type="entry name" value="SEC14"/>
    <property type="match status" value="1"/>
</dbReference>
<dbReference type="SUPFAM" id="SSF52087">
    <property type="entry name" value="CRAL/TRIO domain"/>
    <property type="match status" value="1"/>
</dbReference>
<dbReference type="SUPFAM" id="SSF46938">
    <property type="entry name" value="CRAL/TRIO N-terminal domain"/>
    <property type="match status" value="1"/>
</dbReference>
<dbReference type="PROSITE" id="PS50191">
    <property type="entry name" value="CRAL_TRIO"/>
    <property type="match status" value="1"/>
</dbReference>